<keyword id="KW-0378">Hydrolase</keyword>
<keyword id="KW-0408">Iron</keyword>
<keyword id="KW-0479">Metal-binding</keyword>
<keyword id="KW-0648">Protein biosynthesis</keyword>
<organism>
    <name type="scientific">Sodalis glossinidius (strain morsitans)</name>
    <dbReference type="NCBI Taxonomy" id="343509"/>
    <lineage>
        <taxon>Bacteria</taxon>
        <taxon>Pseudomonadati</taxon>
        <taxon>Pseudomonadota</taxon>
        <taxon>Gammaproteobacteria</taxon>
        <taxon>Enterobacterales</taxon>
        <taxon>Bruguierivoracaceae</taxon>
        <taxon>Sodalis</taxon>
    </lineage>
</organism>
<gene>
    <name evidence="1" type="primary">def</name>
    <name type="ordered locus">SG2246</name>
</gene>
<sequence>MSLLQVLHYPDERLRKVAKPVVDVNDAIRRIVDDMFETMYAEEGIGLAATQVDIHQRIIVIDVSESRDQRLVMINPELLEKSGETGIDEGCLSIPDQRGFVPRAEKVKVQALDRDGNSFELEADDLLAICIQHEMDHLVGKLFVDYLSPLKRQRIRQKMEKLARMTARAEK</sequence>
<dbReference type="EC" id="3.5.1.88" evidence="1"/>
<dbReference type="EMBL" id="AP008232">
    <property type="protein sequence ID" value="BAE75521.1"/>
    <property type="molecule type" value="Genomic_DNA"/>
</dbReference>
<dbReference type="RefSeq" id="WP_011412057.1">
    <property type="nucleotide sequence ID" value="NC_007712.1"/>
</dbReference>
<dbReference type="SMR" id="Q2NQQ4"/>
<dbReference type="STRING" id="343509.SG2246"/>
<dbReference type="KEGG" id="sgl:SG2246"/>
<dbReference type="eggNOG" id="COG0242">
    <property type="taxonomic scope" value="Bacteria"/>
</dbReference>
<dbReference type="HOGENOM" id="CLU_061901_2_1_6"/>
<dbReference type="Proteomes" id="UP000001932">
    <property type="component" value="Chromosome"/>
</dbReference>
<dbReference type="GO" id="GO:0046872">
    <property type="term" value="F:metal ion binding"/>
    <property type="evidence" value="ECO:0007669"/>
    <property type="project" value="UniProtKB-KW"/>
</dbReference>
<dbReference type="GO" id="GO:0042586">
    <property type="term" value="F:peptide deformylase activity"/>
    <property type="evidence" value="ECO:0007669"/>
    <property type="project" value="UniProtKB-UniRule"/>
</dbReference>
<dbReference type="GO" id="GO:0043686">
    <property type="term" value="P:co-translational protein modification"/>
    <property type="evidence" value="ECO:0007669"/>
    <property type="project" value="TreeGrafter"/>
</dbReference>
<dbReference type="GO" id="GO:0006412">
    <property type="term" value="P:translation"/>
    <property type="evidence" value="ECO:0007669"/>
    <property type="project" value="UniProtKB-UniRule"/>
</dbReference>
<dbReference type="CDD" id="cd00487">
    <property type="entry name" value="Pep_deformylase"/>
    <property type="match status" value="1"/>
</dbReference>
<dbReference type="FunFam" id="3.90.45.10:FF:000001">
    <property type="entry name" value="Peptide deformylase"/>
    <property type="match status" value="1"/>
</dbReference>
<dbReference type="Gene3D" id="3.90.45.10">
    <property type="entry name" value="Peptide deformylase"/>
    <property type="match status" value="1"/>
</dbReference>
<dbReference type="HAMAP" id="MF_00163">
    <property type="entry name" value="Pep_deformylase"/>
    <property type="match status" value="1"/>
</dbReference>
<dbReference type="InterPro" id="IPR023635">
    <property type="entry name" value="Peptide_deformylase"/>
</dbReference>
<dbReference type="InterPro" id="IPR036821">
    <property type="entry name" value="Peptide_deformylase_sf"/>
</dbReference>
<dbReference type="NCBIfam" id="TIGR00079">
    <property type="entry name" value="pept_deformyl"/>
    <property type="match status" value="1"/>
</dbReference>
<dbReference type="NCBIfam" id="NF001159">
    <property type="entry name" value="PRK00150.1-3"/>
    <property type="match status" value="1"/>
</dbReference>
<dbReference type="PANTHER" id="PTHR10458">
    <property type="entry name" value="PEPTIDE DEFORMYLASE"/>
    <property type="match status" value="1"/>
</dbReference>
<dbReference type="PANTHER" id="PTHR10458:SF21">
    <property type="entry name" value="PEPTIDE DEFORMYLASE"/>
    <property type="match status" value="1"/>
</dbReference>
<dbReference type="Pfam" id="PF01327">
    <property type="entry name" value="Pep_deformylase"/>
    <property type="match status" value="1"/>
</dbReference>
<dbReference type="PIRSF" id="PIRSF004749">
    <property type="entry name" value="Pep_def"/>
    <property type="match status" value="1"/>
</dbReference>
<dbReference type="PRINTS" id="PR01576">
    <property type="entry name" value="PDEFORMYLASE"/>
</dbReference>
<dbReference type="SUPFAM" id="SSF56420">
    <property type="entry name" value="Peptide deformylase"/>
    <property type="match status" value="1"/>
</dbReference>
<evidence type="ECO:0000255" key="1">
    <source>
        <dbReference type="HAMAP-Rule" id="MF_00163"/>
    </source>
</evidence>
<proteinExistence type="inferred from homology"/>
<protein>
    <recommendedName>
        <fullName evidence="1">Peptide deformylase</fullName>
        <shortName evidence="1">PDF</shortName>
        <ecNumber evidence="1">3.5.1.88</ecNumber>
    </recommendedName>
    <alternativeName>
        <fullName evidence="1">Polypeptide deformylase</fullName>
    </alternativeName>
</protein>
<comment type="function">
    <text evidence="1">Removes the formyl group from the N-terminal Met of newly synthesized proteins. Requires at least a dipeptide for an efficient rate of reaction. N-terminal L-methionine is a prerequisite for activity but the enzyme has broad specificity at other positions.</text>
</comment>
<comment type="catalytic activity">
    <reaction evidence="1">
        <text>N-terminal N-formyl-L-methionyl-[peptide] + H2O = N-terminal L-methionyl-[peptide] + formate</text>
        <dbReference type="Rhea" id="RHEA:24420"/>
        <dbReference type="Rhea" id="RHEA-COMP:10639"/>
        <dbReference type="Rhea" id="RHEA-COMP:10640"/>
        <dbReference type="ChEBI" id="CHEBI:15377"/>
        <dbReference type="ChEBI" id="CHEBI:15740"/>
        <dbReference type="ChEBI" id="CHEBI:49298"/>
        <dbReference type="ChEBI" id="CHEBI:64731"/>
        <dbReference type="EC" id="3.5.1.88"/>
    </reaction>
</comment>
<comment type="cofactor">
    <cofactor evidence="1">
        <name>Fe(2+)</name>
        <dbReference type="ChEBI" id="CHEBI:29033"/>
    </cofactor>
    <text evidence="1">Binds 1 Fe(2+) ion.</text>
</comment>
<comment type="similarity">
    <text evidence="1">Belongs to the polypeptide deformylase family.</text>
</comment>
<name>DEF_SODGM</name>
<accession>Q2NQQ4</accession>
<feature type="chain" id="PRO_0000301100" description="Peptide deformylase">
    <location>
        <begin position="1"/>
        <end position="171"/>
    </location>
</feature>
<feature type="active site" evidence="1">
    <location>
        <position position="134"/>
    </location>
</feature>
<feature type="binding site" evidence="1">
    <location>
        <position position="91"/>
    </location>
    <ligand>
        <name>Fe cation</name>
        <dbReference type="ChEBI" id="CHEBI:24875"/>
    </ligand>
</feature>
<feature type="binding site" evidence="1">
    <location>
        <position position="133"/>
    </location>
    <ligand>
        <name>Fe cation</name>
        <dbReference type="ChEBI" id="CHEBI:24875"/>
    </ligand>
</feature>
<feature type="binding site" evidence="1">
    <location>
        <position position="137"/>
    </location>
    <ligand>
        <name>Fe cation</name>
        <dbReference type="ChEBI" id="CHEBI:24875"/>
    </ligand>
</feature>
<reference key="1">
    <citation type="journal article" date="2006" name="Genome Res.">
        <title>Massive genome erosion and functional adaptations provide insights into the symbiotic lifestyle of Sodalis glossinidius in the tsetse host.</title>
        <authorList>
            <person name="Toh H."/>
            <person name="Weiss B.L."/>
            <person name="Perkin S.A.H."/>
            <person name="Yamashita A."/>
            <person name="Oshima K."/>
            <person name="Hattori M."/>
            <person name="Aksoy S."/>
        </authorList>
    </citation>
    <scope>NUCLEOTIDE SEQUENCE [LARGE SCALE GENOMIC DNA]</scope>
    <source>
        <strain>morsitans</strain>
    </source>
</reference>